<organism>
    <name type="scientific">Mycobacterium bovis (strain BCG / Pasteur 1173P2)</name>
    <dbReference type="NCBI Taxonomy" id="410289"/>
    <lineage>
        <taxon>Bacteria</taxon>
        <taxon>Bacillati</taxon>
        <taxon>Actinomycetota</taxon>
        <taxon>Actinomycetes</taxon>
        <taxon>Mycobacteriales</taxon>
        <taxon>Mycobacteriaceae</taxon>
        <taxon>Mycobacterium</taxon>
        <taxon>Mycobacterium tuberculosis complex</taxon>
    </lineage>
</organism>
<sequence>MGKNEARRSALAPDHGTVVCDPLRRLNRMHATPEESIRIVAAQKKKAQDEYGAASITILEGLEAVRKRPGMYIGSTGERGLHHLIWEVVDNAVDEAMAGYATTVNVVLLEDGGVEVADDGRGIPVATHASGIPTVDVVMTQLHAGGKFDSDAYAISGGLHGVGVSVVNALSTRLEVEIKRDGYEWSQVYEKSEPLGLKQGAPTKKTGSTVRFWADPAVFETTEYDFETVARRLQEMAFLNKGLTINLTDERVTQDEVVDEVVSDVAEAPKSASERAAESTAPHKVKSRTFHYPGGLVDFVKHINRTKNAIHSSIVDFSGKGTGHEVEIAMQWNAGYSESVHTFANTINTHEGGTHEEGFRSALTSVVNKYAKDRKLLKDKDPNLTGDDIREGLAAVISVKVSEPQFEGQTKTKLGNTEVKSFVQKVCNEQLTHWFEANPTDSKVVVNKAVSSAQARIAARKARELVRRKSATDIGGLPGKLADCRSTDPRKSELYVVEGDSAGGSAKSGRDSMFQAILPLRGKIINVEKARIDRVLKNTEVQAIITALGTGIHDEFDIGKLRYHKIVLMADADVDGQHISTLLLTLLFRFMRPLIENGHVFLAQPPLYKLKWQRSDPEFAYSDRERDGLLEAGLKAGKKINKEDGIQRYKGLGEMDAKELWETTMDPSVRVLRQVTLDDAAAADELFSILMGEDVDARRSFITRNAKDVRFLDV</sequence>
<protein>
    <recommendedName>
        <fullName evidence="1">DNA gyrase subunit B</fullName>
        <ecNumber evidence="1">5.6.2.2</ecNumber>
    </recommendedName>
</protein>
<proteinExistence type="evidence at protein level"/>
<name>GYRB_MYCBP</name>
<gene>
    <name evidence="1" type="primary">gyrB1</name>
    <name type="ordered locus">BCG_0005</name>
</gene>
<gene>
    <name evidence="1" type="primary">gyrB2</name>
    <name type="ordered locus">BCG_0035</name>
</gene>
<feature type="chain" id="PRO_0000435541" description="DNA gyrase subunit B">
    <location>
        <begin position="1"/>
        <end position="714"/>
    </location>
</feature>
<feature type="domain" description="Toprim" evidence="1">
    <location>
        <begin position="492"/>
        <end position="606"/>
    </location>
</feature>
<feature type="binding site" evidence="1">
    <location>
        <position position="498"/>
    </location>
    <ligand>
        <name>Mg(2+)</name>
        <dbReference type="ChEBI" id="CHEBI:18420"/>
        <label>1</label>
        <note>catalytic</note>
    </ligand>
</feature>
<feature type="binding site" evidence="1">
    <location>
        <position position="571"/>
    </location>
    <ligand>
        <name>Mg(2+)</name>
        <dbReference type="ChEBI" id="CHEBI:18420"/>
        <label>1</label>
        <note>catalytic</note>
    </ligand>
</feature>
<feature type="binding site" evidence="1">
    <location>
        <position position="571"/>
    </location>
    <ligand>
        <name>Mg(2+)</name>
        <dbReference type="ChEBI" id="CHEBI:18420"/>
        <label>2</label>
    </ligand>
</feature>
<feature type="binding site" evidence="1">
    <location>
        <position position="573"/>
    </location>
    <ligand>
        <name>Mg(2+)</name>
        <dbReference type="ChEBI" id="CHEBI:18420"/>
        <label>2</label>
    </ligand>
</feature>
<feature type="site" description="Interaction with DNA" evidence="1">
    <location>
        <position position="523"/>
    </location>
</feature>
<feature type="site" description="Interaction with DNA" evidence="1">
    <location>
        <position position="526"/>
    </location>
</feature>
<evidence type="ECO:0000255" key="1">
    <source>
        <dbReference type="HAMAP-Rule" id="MF_01898"/>
    </source>
</evidence>
<evidence type="ECO:0000269" key="2">
    <source>
    </source>
</evidence>
<keyword id="KW-0067">ATP-binding</keyword>
<keyword id="KW-0963">Cytoplasm</keyword>
<keyword id="KW-0238">DNA-binding</keyword>
<keyword id="KW-0413">Isomerase</keyword>
<keyword id="KW-0460">Magnesium</keyword>
<keyword id="KW-0479">Metal-binding</keyword>
<keyword id="KW-0547">Nucleotide-binding</keyword>
<keyword id="KW-0799">Topoisomerase</keyword>
<comment type="function">
    <text evidence="2">A type II topoisomerase that negatively supercoils closed circular double-stranded DNA in an ATP-dependent manner and also catalyzes the interconversion of other topological isomers of double-stranded DNA rings, including catenanes and knotted rings. Relaxes negatively supercoiled DNA in an ATP-independent manner. A linear reaction intermediate can be trapped in the presence of the antibiotic ciprofloxacin (PubMed:7503546). Negative supercoiling favors strand separation, and DNA replication, transcription, recombination and repair, all of which involve strand separation. Type II topoisomerases break and join 2 DNA strands simultaneously in an ATP-dependent manner.</text>
</comment>
<comment type="catalytic activity">
    <reaction evidence="1">
        <text>ATP-dependent breakage, passage and rejoining of double-stranded DNA.</text>
        <dbReference type="EC" id="5.6.2.2"/>
    </reaction>
</comment>
<comment type="cofactor">
    <cofactor evidence="1 2">
        <name>Mg(2+)</name>
        <dbReference type="ChEBI" id="CHEBI:18420"/>
    </cofactor>
    <cofactor evidence="1">
        <name>Mn(2+)</name>
        <dbReference type="ChEBI" id="CHEBI:29035"/>
    </cofactor>
    <cofactor evidence="1">
        <name>Ca(2+)</name>
        <dbReference type="ChEBI" id="CHEBI:29108"/>
    </cofactor>
    <text evidence="1">Binds two Mg(2+) per subunit. The magnesium ions form salt bridges with both the protein and the DNA. Can also accept other divalent metal cations, such as Mn(2+) or Ca(2+).</text>
</comment>
<comment type="activity regulation">
    <text evidence="2">DNA supercoiling is inhibited by EDTA, novobiocin, coumermycin and ciprofloxacin (PubMed:7503546).</text>
</comment>
<comment type="subunit">
    <text evidence="1 2">Heterotetramer, composed of two GyrA and two GyrB chains (PubMed:7503546). In the heterotetramer, GyrA contains the active site tyrosine that forms a transient covalent intermediate with DNA, while GyrB binds cofactors and catalyzes ATP hydrolysis.</text>
</comment>
<comment type="subcellular location">
    <subcellularLocation>
        <location evidence="1">Cytoplasm</location>
    </subcellularLocation>
</comment>
<comment type="miscellaneous">
    <text evidence="1">Few gyrases are as efficient as E.coli at forming negative supercoils. Not all organisms have 2 type II topoisomerases; in organisms with a single type II topoisomerase this enzyme also has to decatenate newly replicated chromosomes.</text>
</comment>
<comment type="similarity">
    <text evidence="1">Belongs to the type II topoisomerase GyrB family.</text>
</comment>
<dbReference type="EC" id="5.6.2.2" evidence="1"/>
<dbReference type="EMBL" id="AM408590">
    <property type="protein sequence ID" value="CAL69989.1"/>
    <property type="molecule type" value="Genomic_DNA"/>
</dbReference>
<dbReference type="EMBL" id="AM408590">
    <property type="protein sequence ID" value="CAL70019.1"/>
    <property type="molecule type" value="Genomic_DNA"/>
</dbReference>
<dbReference type="SMR" id="A0A0G2Q9D6"/>
<dbReference type="KEGG" id="mbb:BCG_0005"/>
<dbReference type="KEGG" id="mbb:BCG_0035"/>
<dbReference type="HOGENOM" id="CLU_006146_4_1_11"/>
<dbReference type="Proteomes" id="UP000001472">
    <property type="component" value="Chromosome"/>
</dbReference>
<dbReference type="GO" id="GO:0005694">
    <property type="term" value="C:chromosome"/>
    <property type="evidence" value="ECO:0007669"/>
    <property type="project" value="InterPro"/>
</dbReference>
<dbReference type="GO" id="GO:0005737">
    <property type="term" value="C:cytoplasm"/>
    <property type="evidence" value="ECO:0007669"/>
    <property type="project" value="UniProtKB-SubCell"/>
</dbReference>
<dbReference type="GO" id="GO:0005524">
    <property type="term" value="F:ATP binding"/>
    <property type="evidence" value="ECO:0007669"/>
    <property type="project" value="UniProtKB-UniRule"/>
</dbReference>
<dbReference type="GO" id="GO:0003677">
    <property type="term" value="F:DNA binding"/>
    <property type="evidence" value="ECO:0007669"/>
    <property type="project" value="UniProtKB-KW"/>
</dbReference>
<dbReference type="GO" id="GO:0034335">
    <property type="term" value="F:DNA negative supercoiling activity"/>
    <property type="evidence" value="ECO:0000314"/>
    <property type="project" value="UniProtKB"/>
</dbReference>
<dbReference type="GO" id="GO:0046872">
    <property type="term" value="F:metal ion binding"/>
    <property type="evidence" value="ECO:0007669"/>
    <property type="project" value="UniProtKB-KW"/>
</dbReference>
<dbReference type="GO" id="GO:0006265">
    <property type="term" value="P:DNA topological change"/>
    <property type="evidence" value="ECO:0007669"/>
    <property type="project" value="UniProtKB-UniRule"/>
</dbReference>
<dbReference type="GO" id="GO:0006261">
    <property type="term" value="P:DNA-templated DNA replication"/>
    <property type="evidence" value="ECO:0007669"/>
    <property type="project" value="UniProtKB-UniRule"/>
</dbReference>
<dbReference type="CDD" id="cd16928">
    <property type="entry name" value="HATPase_GyrB-like"/>
    <property type="match status" value="1"/>
</dbReference>
<dbReference type="CDD" id="cd00822">
    <property type="entry name" value="TopoII_Trans_DNA_gyrase"/>
    <property type="match status" value="1"/>
</dbReference>
<dbReference type="CDD" id="cd03366">
    <property type="entry name" value="TOPRIM_TopoIIA_GyrB"/>
    <property type="match status" value="1"/>
</dbReference>
<dbReference type="FunFam" id="3.30.230.10:FF:000005">
    <property type="entry name" value="DNA gyrase subunit B"/>
    <property type="match status" value="1"/>
</dbReference>
<dbReference type="FunFam" id="3.30.565.10:FF:000002">
    <property type="entry name" value="DNA gyrase subunit B"/>
    <property type="match status" value="1"/>
</dbReference>
<dbReference type="FunFam" id="3.40.50.670:FF:000002">
    <property type="entry name" value="DNA gyrase subunit B"/>
    <property type="match status" value="1"/>
</dbReference>
<dbReference type="Gene3D" id="3.30.230.10">
    <property type="match status" value="1"/>
</dbReference>
<dbReference type="Gene3D" id="3.40.50.670">
    <property type="match status" value="1"/>
</dbReference>
<dbReference type="Gene3D" id="3.30.565.10">
    <property type="entry name" value="Histidine kinase-like ATPase, C-terminal domain"/>
    <property type="match status" value="1"/>
</dbReference>
<dbReference type="HAMAP" id="MF_01898">
    <property type="entry name" value="GyrB"/>
    <property type="match status" value="1"/>
</dbReference>
<dbReference type="InterPro" id="IPR002288">
    <property type="entry name" value="DNA_gyrase_B_C"/>
</dbReference>
<dbReference type="InterPro" id="IPR011557">
    <property type="entry name" value="GyrB"/>
</dbReference>
<dbReference type="InterPro" id="IPR036890">
    <property type="entry name" value="HATPase_C_sf"/>
</dbReference>
<dbReference type="InterPro" id="IPR020568">
    <property type="entry name" value="Ribosomal_Su5_D2-typ_SF"/>
</dbReference>
<dbReference type="InterPro" id="IPR014721">
    <property type="entry name" value="Ribsml_uS5_D2-typ_fold_subgr"/>
</dbReference>
<dbReference type="InterPro" id="IPR001241">
    <property type="entry name" value="Topo_IIA"/>
</dbReference>
<dbReference type="InterPro" id="IPR013760">
    <property type="entry name" value="Topo_IIA-like_dom_sf"/>
</dbReference>
<dbReference type="InterPro" id="IPR000565">
    <property type="entry name" value="Topo_IIA_B"/>
</dbReference>
<dbReference type="InterPro" id="IPR013759">
    <property type="entry name" value="Topo_IIA_B_C"/>
</dbReference>
<dbReference type="InterPro" id="IPR013506">
    <property type="entry name" value="Topo_IIA_bsu_dom2"/>
</dbReference>
<dbReference type="InterPro" id="IPR018522">
    <property type="entry name" value="TopoIIA_CS"/>
</dbReference>
<dbReference type="InterPro" id="IPR006171">
    <property type="entry name" value="TOPRIM_dom"/>
</dbReference>
<dbReference type="InterPro" id="IPR034160">
    <property type="entry name" value="TOPRIM_GyrB"/>
</dbReference>
<dbReference type="NCBIfam" id="TIGR01059">
    <property type="entry name" value="gyrB"/>
    <property type="match status" value="1"/>
</dbReference>
<dbReference type="NCBIfam" id="NF004189">
    <property type="entry name" value="PRK05644.1"/>
    <property type="match status" value="1"/>
</dbReference>
<dbReference type="PANTHER" id="PTHR45866:SF1">
    <property type="entry name" value="DNA GYRASE SUBUNIT B, MITOCHONDRIAL"/>
    <property type="match status" value="1"/>
</dbReference>
<dbReference type="PANTHER" id="PTHR45866">
    <property type="entry name" value="DNA GYRASE/TOPOISOMERASE SUBUNIT B"/>
    <property type="match status" value="1"/>
</dbReference>
<dbReference type="Pfam" id="PF00204">
    <property type="entry name" value="DNA_gyraseB"/>
    <property type="match status" value="1"/>
</dbReference>
<dbReference type="Pfam" id="PF00986">
    <property type="entry name" value="DNA_gyraseB_C"/>
    <property type="match status" value="1"/>
</dbReference>
<dbReference type="Pfam" id="PF02518">
    <property type="entry name" value="HATPase_c"/>
    <property type="match status" value="1"/>
</dbReference>
<dbReference type="Pfam" id="PF01751">
    <property type="entry name" value="Toprim"/>
    <property type="match status" value="1"/>
</dbReference>
<dbReference type="PRINTS" id="PR01159">
    <property type="entry name" value="DNAGYRASEB"/>
</dbReference>
<dbReference type="PRINTS" id="PR00418">
    <property type="entry name" value="TPI2FAMILY"/>
</dbReference>
<dbReference type="SMART" id="SM00387">
    <property type="entry name" value="HATPase_c"/>
    <property type="match status" value="1"/>
</dbReference>
<dbReference type="SMART" id="SM00433">
    <property type="entry name" value="TOP2c"/>
    <property type="match status" value="1"/>
</dbReference>
<dbReference type="SUPFAM" id="SSF55874">
    <property type="entry name" value="ATPase domain of HSP90 chaperone/DNA topoisomerase II/histidine kinase"/>
    <property type="match status" value="1"/>
</dbReference>
<dbReference type="SUPFAM" id="SSF54211">
    <property type="entry name" value="Ribosomal protein S5 domain 2-like"/>
    <property type="match status" value="1"/>
</dbReference>
<dbReference type="SUPFAM" id="SSF56719">
    <property type="entry name" value="Type II DNA topoisomerase"/>
    <property type="match status" value="1"/>
</dbReference>
<dbReference type="PROSITE" id="PS00177">
    <property type="entry name" value="TOPOISOMERASE_II"/>
    <property type="match status" value="1"/>
</dbReference>
<dbReference type="PROSITE" id="PS50880">
    <property type="entry name" value="TOPRIM"/>
    <property type="match status" value="1"/>
</dbReference>
<accession>A0A0G2Q9D6</accession>
<reference key="1">
    <citation type="journal article" date="2007" name="Proc. Natl. Acad. Sci. U.S.A.">
        <title>Genome plasticity of BCG and impact on vaccine efficacy.</title>
        <authorList>
            <person name="Brosch R."/>
            <person name="Gordon S.V."/>
            <person name="Garnier T."/>
            <person name="Eiglmeier K."/>
            <person name="Frigui W."/>
            <person name="Valenti P."/>
            <person name="Dos Santos S."/>
            <person name="Duthoy S."/>
            <person name="Lacroix C."/>
            <person name="Garcia-Pelayo C."/>
            <person name="Inwald J.K."/>
            <person name="Golby P."/>
            <person name="Garcia J.N."/>
            <person name="Hewinson R.G."/>
            <person name="Behr M.A."/>
            <person name="Quail M.A."/>
            <person name="Churcher C."/>
            <person name="Barrell B.G."/>
            <person name="Parkhill J."/>
            <person name="Cole S.T."/>
        </authorList>
    </citation>
    <scope>NUCLEOTIDE SEQUENCE [LARGE SCALE GENOMIC DNA]</scope>
    <source>
        <strain>BCG / Pasteur 1173P2</strain>
    </source>
</reference>
<reference key="2">
    <citation type="journal article" date="1995" name="Arch. Biochem. Biophys.">
        <title>Mycobacterial DNA gyrase: enzyme purification and characterization of supercoiling activity.</title>
        <authorList>
            <person name="Wu L.C."/>
            <person name="Shahied S.I."/>
        </authorList>
    </citation>
    <scope>FUNCTION</scope>
    <scope>COFACTOR</scope>
    <scope>ACTIVITY REGULATION</scope>
    <scope>SUBUNIT</scope>
    <scope>REACTION MECHANISM</scope>
    <source>
        <strain>BCG / ATCC 27289 / DSM 43990</strain>
    </source>
</reference>